<accession>Q2NHH7</accession>
<comment type="function">
    <text evidence="2">Catalyzes the ATP- and formate-dependent formylation of 5-aminoimidazole-4-carboxamide-1-beta-d-ribofuranosyl 5'-monophosphate (AICAR) to 5-formaminoimidazole-4-carboxamide-1-beta-d-ribofuranosyl 5'-monophosphate (FAICAR) in the absence of folates.</text>
</comment>
<comment type="catalytic activity">
    <reaction evidence="2">
        <text>5-amino-1-(5-phospho-beta-D-ribosyl)imidazole-4-carboxamide + formate + ATP = 5-formamido-1-(5-phospho-D-ribosyl)imidazole-4-carboxamide + ADP + phosphate</text>
        <dbReference type="Rhea" id="RHEA:24836"/>
        <dbReference type="ChEBI" id="CHEBI:15740"/>
        <dbReference type="ChEBI" id="CHEBI:30616"/>
        <dbReference type="ChEBI" id="CHEBI:43474"/>
        <dbReference type="ChEBI" id="CHEBI:58467"/>
        <dbReference type="ChEBI" id="CHEBI:58475"/>
        <dbReference type="ChEBI" id="CHEBI:456216"/>
        <dbReference type="EC" id="6.3.4.23"/>
    </reaction>
</comment>
<comment type="cofactor">
    <cofactor evidence="1">
        <name>Mg(2+)</name>
        <dbReference type="ChEBI" id="CHEBI:18420"/>
    </cofactor>
    <cofactor evidence="1">
        <name>Mn(2+)</name>
        <dbReference type="ChEBI" id="CHEBI:29035"/>
    </cofactor>
    <text evidence="1">Binds 1 Mg(2+) or Mn(2+) ion per subunit.</text>
</comment>
<comment type="pathway">
    <text evidence="2">Purine metabolism; IMP biosynthesis via de novo pathway; 5-formamido-1-(5-phospho-D-ribosyl)imidazole-4-carboxamide from 5-amino-1-(5-phospho-D-ribosyl)imidazole-4-carboxamide (formate route): step 1/1.</text>
</comment>
<comment type="similarity">
    <text evidence="2">Belongs to the phosphohexose mutase family.</text>
</comment>
<dbReference type="EC" id="6.3.4.23" evidence="2"/>
<dbReference type="EMBL" id="CP000102">
    <property type="protein sequence ID" value="ABC56656.1"/>
    <property type="molecule type" value="Genomic_DNA"/>
</dbReference>
<dbReference type="RefSeq" id="WP_011405855.1">
    <property type="nucleotide sequence ID" value="NC_007681.1"/>
</dbReference>
<dbReference type="SMR" id="Q2NHH7"/>
<dbReference type="STRING" id="339860.Msp_0240"/>
<dbReference type="KEGG" id="mst:Msp_0240"/>
<dbReference type="eggNOG" id="arCOG04346">
    <property type="taxonomic scope" value="Archaea"/>
</dbReference>
<dbReference type="HOGENOM" id="CLU_065084_0_0_2"/>
<dbReference type="OrthoDB" id="98133at2157"/>
<dbReference type="UniPathway" id="UPA00074">
    <property type="reaction ID" value="UER00134"/>
</dbReference>
<dbReference type="Proteomes" id="UP000001931">
    <property type="component" value="Chromosome"/>
</dbReference>
<dbReference type="GO" id="GO:0005524">
    <property type="term" value="F:ATP binding"/>
    <property type="evidence" value="ECO:0007669"/>
    <property type="project" value="UniProtKB-KW"/>
</dbReference>
<dbReference type="GO" id="GO:0016879">
    <property type="term" value="F:ligase activity, forming carbon-nitrogen bonds"/>
    <property type="evidence" value="ECO:0007669"/>
    <property type="project" value="UniProtKB-UniRule"/>
</dbReference>
<dbReference type="GO" id="GO:0000287">
    <property type="term" value="F:magnesium ion binding"/>
    <property type="evidence" value="ECO:0007669"/>
    <property type="project" value="InterPro"/>
</dbReference>
<dbReference type="GO" id="GO:0006189">
    <property type="term" value="P:'de novo' IMP biosynthetic process"/>
    <property type="evidence" value="ECO:0007669"/>
    <property type="project" value="UniProtKB-UniRule"/>
</dbReference>
<dbReference type="Gene3D" id="3.40.50.20">
    <property type="match status" value="1"/>
</dbReference>
<dbReference type="Gene3D" id="3.30.1490.20">
    <property type="entry name" value="ATP-grasp fold, A domain"/>
    <property type="match status" value="1"/>
</dbReference>
<dbReference type="Gene3D" id="3.30.470.20">
    <property type="entry name" value="ATP-grasp fold, B domain"/>
    <property type="match status" value="1"/>
</dbReference>
<dbReference type="HAMAP" id="MF_01163">
    <property type="entry name" value="IMP_biosynth_PurP"/>
    <property type="match status" value="1"/>
</dbReference>
<dbReference type="InterPro" id="IPR011761">
    <property type="entry name" value="ATP-grasp"/>
</dbReference>
<dbReference type="InterPro" id="IPR013815">
    <property type="entry name" value="ATP_grasp_subdomain_1"/>
</dbReference>
<dbReference type="InterPro" id="IPR023656">
    <property type="entry name" value="IMP_biosynth_PurP"/>
</dbReference>
<dbReference type="InterPro" id="IPR009720">
    <property type="entry name" value="IMP_biosynth_PurP_C"/>
</dbReference>
<dbReference type="InterPro" id="IPR010672">
    <property type="entry name" value="IMP_biosynth_PurP_N"/>
</dbReference>
<dbReference type="InterPro" id="IPR016185">
    <property type="entry name" value="PreATP-grasp_dom_sf"/>
</dbReference>
<dbReference type="NCBIfam" id="NF009780">
    <property type="entry name" value="PRK13278.1-5"/>
    <property type="match status" value="1"/>
</dbReference>
<dbReference type="PANTHER" id="PTHR38147:SF2">
    <property type="entry name" value="5-FORMAMINOIMIDAZOLE-4-CARBOXAMIDE-1-(BETA)-D-RIBOFURANOSYL 5'-MONOPHOSPHATE SYNTHETASE"/>
    <property type="match status" value="1"/>
</dbReference>
<dbReference type="PANTHER" id="PTHR38147">
    <property type="entry name" value="5-FORMAMINOIMIDAZOLE-4-CARBOXAMIDE-1-(BETA)-D-RIBOFURANOSYL 5'-MONOPHOSPHATE SYNTHETASE-RELATED"/>
    <property type="match status" value="1"/>
</dbReference>
<dbReference type="Pfam" id="PF06849">
    <property type="entry name" value="DUF1246"/>
    <property type="match status" value="1"/>
</dbReference>
<dbReference type="Pfam" id="PF06973">
    <property type="entry name" value="DUF1297"/>
    <property type="match status" value="1"/>
</dbReference>
<dbReference type="PIRSF" id="PIRSF004602">
    <property type="entry name" value="ATPgrasp_PurP"/>
    <property type="match status" value="1"/>
</dbReference>
<dbReference type="SUPFAM" id="SSF56059">
    <property type="entry name" value="Glutathione synthetase ATP-binding domain-like"/>
    <property type="match status" value="1"/>
</dbReference>
<dbReference type="SUPFAM" id="SSF52440">
    <property type="entry name" value="PreATP-grasp domain"/>
    <property type="match status" value="1"/>
</dbReference>
<dbReference type="PROSITE" id="PS50975">
    <property type="entry name" value="ATP_GRASP"/>
    <property type="match status" value="1"/>
</dbReference>
<feature type="chain" id="PRO_0000348629" description="5-formaminoimidazole-4-carboxamide-1-(beta)-D-ribofuranosyl 5'-monophosphate synthetase">
    <location>
        <begin position="1"/>
        <end position="363"/>
    </location>
</feature>
<feature type="domain" description="ATP-grasp" evidence="2">
    <location>
        <begin position="118"/>
        <end position="354"/>
    </location>
</feature>
<feature type="binding site" evidence="2">
    <location>
        <position position="29"/>
    </location>
    <ligand>
        <name>5-amino-1-(5-phospho-beta-D-ribosyl)imidazole-4-carboxamide</name>
        <dbReference type="ChEBI" id="CHEBI:58475"/>
    </ligand>
</feature>
<feature type="binding site" evidence="2">
    <location>
        <position position="96"/>
    </location>
    <ligand>
        <name>5-amino-1-(5-phospho-beta-D-ribosyl)imidazole-4-carboxamide</name>
        <dbReference type="ChEBI" id="CHEBI:58475"/>
    </ligand>
</feature>
<feature type="binding site" evidence="2">
    <location>
        <begin position="148"/>
        <end position="210"/>
    </location>
    <ligand>
        <name>ATP</name>
        <dbReference type="ChEBI" id="CHEBI:30616"/>
    </ligand>
</feature>
<feature type="binding site" evidence="2">
    <location>
        <position position="232"/>
    </location>
    <ligand>
        <name>ATP</name>
        <dbReference type="ChEBI" id="CHEBI:30616"/>
    </ligand>
</feature>
<feature type="binding site" evidence="2">
    <location>
        <position position="260"/>
    </location>
    <ligand>
        <name>5-amino-1-(5-phospho-beta-D-ribosyl)imidazole-4-carboxamide</name>
        <dbReference type="ChEBI" id="CHEBI:58475"/>
    </ligand>
</feature>
<feature type="binding site" evidence="2">
    <location>
        <position position="299"/>
    </location>
    <ligand>
        <name>Mg(2+)</name>
        <dbReference type="ChEBI" id="CHEBI:18420"/>
    </ligand>
</feature>
<feature type="binding site" evidence="2">
    <location>
        <position position="312"/>
    </location>
    <ligand>
        <name>Mg(2+)</name>
        <dbReference type="ChEBI" id="CHEBI:18420"/>
    </ligand>
</feature>
<evidence type="ECO:0000250" key="1"/>
<evidence type="ECO:0000255" key="2">
    <source>
        <dbReference type="HAMAP-Rule" id="MF_01163"/>
    </source>
</evidence>
<organism>
    <name type="scientific">Methanosphaera stadtmanae (strain ATCC 43021 / DSM 3091 / JCM 11832 / MCB-3)</name>
    <dbReference type="NCBI Taxonomy" id="339860"/>
    <lineage>
        <taxon>Archaea</taxon>
        <taxon>Methanobacteriati</taxon>
        <taxon>Methanobacteriota</taxon>
        <taxon>Methanomada group</taxon>
        <taxon>Methanobacteria</taxon>
        <taxon>Methanobacteriales</taxon>
        <taxon>Methanobacteriaceae</taxon>
        <taxon>Methanosphaera</taxon>
    </lineage>
</organism>
<reference key="1">
    <citation type="journal article" date="2006" name="J. Bacteriol.">
        <title>The genome sequence of Methanosphaera stadtmanae reveals why this human intestinal archaeon is restricted to methanol and H2 for methane formation and ATP synthesis.</title>
        <authorList>
            <person name="Fricke W.F."/>
            <person name="Seedorf H."/>
            <person name="Henne A."/>
            <person name="Kruer M."/>
            <person name="Liesegang H."/>
            <person name="Hedderich R."/>
            <person name="Gottschalk G."/>
            <person name="Thauer R.K."/>
        </authorList>
    </citation>
    <scope>NUCLEOTIDE SEQUENCE [LARGE SCALE GENOMIC DNA]</scope>
    <source>
        <strain>ATCC 43021 / DSM 3091 / JCM 11832 / MCB-3</strain>
    </source>
</reference>
<gene>
    <name evidence="2" type="primary">purP</name>
    <name type="ordered locus">Msp_0240</name>
</gene>
<protein>
    <recommendedName>
        <fullName evidence="2">5-formaminoimidazole-4-carboxamide-1-(beta)-D-ribofuranosyl 5'-monophosphate synthetase</fullName>
        <ecNumber evidence="2">6.3.4.23</ecNumber>
    </recommendedName>
    <alternativeName>
        <fullName evidence="2">5-aminoimidazole-4-carboxamide-1-beta-D-ribofuranosyl 5'-monophosphate--formate ligase</fullName>
    </alternativeName>
</protein>
<name>PURP_METST</name>
<sequence length="363" mass="41285">MGKVKKEDIMDIVEKYDKSNITIATLGSHTALHILRGAKQEGFRTAVVCEKGKEVPYERFGVADEFIFVDEYKDIVNSDVQDKLRAMNAIVVPHGSFVAYAGLSNVEDKFNVPMFGNRDILRWEAERDKERKMITQSGIRMPRKFDKPEDINKEVMVKFPGARGGQGYFICSSYEEFQNKIQEMKERNWITDSDVKDAHIEEYVCGTNFCIHYFYSALKDEVEVLGMDSRYETNIDGIVRIPAQDQIEANLSPSYVVSGNHPVVIRESLLPQVFENGDRLVETAKKLVKPGMNGPFCLQCLVNDDREIVIFEMSARIDGGTNSFMNGSAYSYIQFGEVMSMGRRISREIKNAIETDKLDVILT</sequence>
<keyword id="KW-0067">ATP-binding</keyword>
<keyword id="KW-0436">Ligase</keyword>
<keyword id="KW-0460">Magnesium</keyword>
<keyword id="KW-0464">Manganese</keyword>
<keyword id="KW-0479">Metal-binding</keyword>
<keyword id="KW-0547">Nucleotide-binding</keyword>
<keyword id="KW-0658">Purine biosynthesis</keyword>
<keyword id="KW-1185">Reference proteome</keyword>
<proteinExistence type="inferred from homology"/>